<dbReference type="EMBL" id="AY028435">
    <property type="protein sequence ID" value="AAK29177.1"/>
    <property type="molecule type" value="mRNA"/>
</dbReference>
<dbReference type="EMBL" id="AK001486">
    <property type="protein sequence ID" value="BAA91718.1"/>
    <property type="molecule type" value="mRNA"/>
</dbReference>
<dbReference type="EMBL" id="AC074091">
    <property type="protein sequence ID" value="AAX93203.1"/>
    <property type="molecule type" value="Genomic_DNA"/>
</dbReference>
<dbReference type="EMBL" id="CH471053">
    <property type="protein sequence ID" value="EAX00555.1"/>
    <property type="molecule type" value="Genomic_DNA"/>
</dbReference>
<dbReference type="EMBL" id="BC098302">
    <property type="protein sequence ID" value="AAH98302.1"/>
    <property type="molecule type" value="mRNA"/>
</dbReference>
<dbReference type="EMBL" id="BC098358">
    <property type="protein sequence ID" value="AAH98358.1"/>
    <property type="molecule type" value="mRNA"/>
</dbReference>
<dbReference type="EMBL" id="BC099711">
    <property type="protein sequence ID" value="AAH99711.1"/>
    <property type="molecule type" value="mRNA"/>
</dbReference>
<dbReference type="EMBL" id="BC099739">
    <property type="protein sequence ID" value="AAH99739.1"/>
    <property type="molecule type" value="mRNA"/>
</dbReference>
<dbReference type="EMBL" id="AY117688">
    <property type="protein sequence ID" value="AAN12269.1"/>
    <property type="status" value="ALT_INIT"/>
    <property type="molecule type" value="mRNA"/>
</dbReference>
<dbReference type="CCDS" id="CCDS33166.2">
    <molecule id="Q9BWU0-2"/>
</dbReference>
<dbReference type="RefSeq" id="NP_060628.3">
    <molecule id="Q9BWU0-2"/>
    <property type="nucleotide sequence ID" value="NM_018158.3"/>
</dbReference>
<dbReference type="PDB" id="4H87">
    <property type="method" value="X-ray"/>
    <property type="resolution" value="1.55 A"/>
    <property type="chains" value="A/B=95-222"/>
</dbReference>
<dbReference type="PDBsum" id="4H87"/>
<dbReference type="SMR" id="Q9BWU0"/>
<dbReference type="BioGRID" id="116605">
    <property type="interactions" value="140"/>
</dbReference>
<dbReference type="FunCoup" id="Q9BWU0">
    <property type="interactions" value="3499"/>
</dbReference>
<dbReference type="IntAct" id="Q9BWU0">
    <property type="interactions" value="61"/>
</dbReference>
<dbReference type="MINT" id="Q9BWU0"/>
<dbReference type="STRING" id="9606.ENSP00000479964"/>
<dbReference type="GlyCosmos" id="Q9BWU0">
    <property type="glycosylation" value="1 site, 1 glycan"/>
</dbReference>
<dbReference type="iPTMnet" id="Q9BWU0"/>
<dbReference type="MetOSite" id="Q9BWU0"/>
<dbReference type="PhosphoSitePlus" id="Q9BWU0"/>
<dbReference type="BioMuta" id="SLC4A1AP"/>
<dbReference type="DMDM" id="74724887"/>
<dbReference type="jPOST" id="Q9BWU0"/>
<dbReference type="MassIVE" id="Q9BWU0"/>
<dbReference type="PaxDb" id="9606-ENSP00000479964"/>
<dbReference type="PeptideAtlas" id="Q9BWU0"/>
<dbReference type="ProteomicsDB" id="79316"/>
<dbReference type="Pumba" id="Q9BWU0"/>
<dbReference type="Antibodypedia" id="28720">
    <property type="antibodies" value="117 antibodies from 25 providers"/>
</dbReference>
<dbReference type="DNASU" id="22950"/>
<dbReference type="Ensembl" id="ENST00000326019.11">
    <molecule id="Q9BWU0-2"/>
    <property type="protein sequence ID" value="ENSP00000323837.7"/>
    <property type="gene ID" value="ENSG00000163798.14"/>
</dbReference>
<dbReference type="Ensembl" id="ENST00000618046.4">
    <molecule id="Q9BWU0-2"/>
    <property type="protein sequence ID" value="ENSP00000483501.1"/>
    <property type="gene ID" value="ENSG00000163798.14"/>
</dbReference>
<dbReference type="GeneID" id="22950"/>
<dbReference type="KEGG" id="hsa:22950"/>
<dbReference type="MANE-Select" id="ENST00000326019.11">
    <property type="protein sequence ID" value="ENSP00000323837.7"/>
    <property type="RefSeq nucleotide sequence ID" value="NM_018158.3"/>
    <property type="RefSeq protein sequence ID" value="NP_060628.3"/>
</dbReference>
<dbReference type="UCSC" id="uc002rlk.5">
    <molecule id="Q9BWU0-2"/>
    <property type="organism name" value="human"/>
</dbReference>
<dbReference type="AGR" id="HGNC:13813"/>
<dbReference type="CTD" id="22950"/>
<dbReference type="DisGeNET" id="22950"/>
<dbReference type="GeneCards" id="SLC4A1AP"/>
<dbReference type="HGNC" id="HGNC:13813">
    <property type="gene designation" value="SLC4A1AP"/>
</dbReference>
<dbReference type="HPA" id="ENSG00000163798">
    <property type="expression patterns" value="Low tissue specificity"/>
</dbReference>
<dbReference type="MIM" id="602655">
    <property type="type" value="gene"/>
</dbReference>
<dbReference type="neXtProt" id="NX_Q9BWU0"/>
<dbReference type="OpenTargets" id="ENSG00000163798"/>
<dbReference type="PharmGKB" id="PA37811"/>
<dbReference type="VEuPathDB" id="HostDB:ENSG00000163798"/>
<dbReference type="eggNOG" id="KOG1881">
    <property type="taxonomic scope" value="Eukaryota"/>
</dbReference>
<dbReference type="GeneTree" id="ENSGT00940000155320"/>
<dbReference type="HOGENOM" id="CLU_015909_2_1_1"/>
<dbReference type="InParanoid" id="Q9BWU0"/>
<dbReference type="OMA" id="QQAIWTF"/>
<dbReference type="OrthoDB" id="433755at2759"/>
<dbReference type="PAN-GO" id="Q9BWU0">
    <property type="GO annotations" value="1 GO annotation based on evolutionary models"/>
</dbReference>
<dbReference type="PhylomeDB" id="Q9BWU0"/>
<dbReference type="TreeFam" id="TF314854"/>
<dbReference type="PathwayCommons" id="Q9BWU0"/>
<dbReference type="SignaLink" id="Q9BWU0"/>
<dbReference type="BioGRID-ORCS" id="22950">
    <property type="hits" value="18 hits in 1167 CRISPR screens"/>
</dbReference>
<dbReference type="ChiTaRS" id="SLC4A1AP">
    <property type="organism name" value="human"/>
</dbReference>
<dbReference type="EvolutionaryTrace" id="Q9BWU0"/>
<dbReference type="GenomeRNAi" id="22950"/>
<dbReference type="Pharos" id="Q9BWU0">
    <property type="development level" value="Tdark"/>
</dbReference>
<dbReference type="PRO" id="PR:Q9BWU0"/>
<dbReference type="Proteomes" id="UP000005640">
    <property type="component" value="Chromosome 2"/>
</dbReference>
<dbReference type="RNAct" id="Q9BWU0">
    <property type="molecule type" value="protein"/>
</dbReference>
<dbReference type="Bgee" id="ENSG00000163798">
    <property type="expression patterns" value="Expressed in calcaneal tendon and 108 other cell types or tissues"/>
</dbReference>
<dbReference type="ExpressionAtlas" id="Q9BWU0">
    <property type="expression patterns" value="baseline and differential"/>
</dbReference>
<dbReference type="GO" id="GO:0005737">
    <property type="term" value="C:cytoplasm"/>
    <property type="evidence" value="ECO:0007669"/>
    <property type="project" value="UniProtKB-SubCell"/>
</dbReference>
<dbReference type="GO" id="GO:0043231">
    <property type="term" value="C:intracellular membrane-bounded organelle"/>
    <property type="evidence" value="ECO:0000314"/>
    <property type="project" value="HPA"/>
</dbReference>
<dbReference type="GO" id="GO:0005654">
    <property type="term" value="C:nucleoplasm"/>
    <property type="evidence" value="ECO:0000314"/>
    <property type="project" value="HPA"/>
</dbReference>
<dbReference type="GO" id="GO:0005886">
    <property type="term" value="C:plasma membrane"/>
    <property type="evidence" value="ECO:0000314"/>
    <property type="project" value="HPA"/>
</dbReference>
<dbReference type="GO" id="GO:0003729">
    <property type="term" value="F:mRNA binding"/>
    <property type="evidence" value="ECO:0000318"/>
    <property type="project" value="GO_Central"/>
</dbReference>
<dbReference type="CDD" id="cd19856">
    <property type="entry name" value="DSRM_Kanadaptin"/>
    <property type="match status" value="1"/>
</dbReference>
<dbReference type="CDD" id="cd22677">
    <property type="entry name" value="FHA_Kanadaptin"/>
    <property type="match status" value="1"/>
</dbReference>
<dbReference type="FunFam" id="2.60.200.20:FF:000023">
    <property type="entry name" value="Solute carrier family 4 member 1 adaptor protein"/>
    <property type="match status" value="1"/>
</dbReference>
<dbReference type="Gene3D" id="2.60.200.20">
    <property type="match status" value="1"/>
</dbReference>
<dbReference type="Gene3D" id="3.30.160.20">
    <property type="match status" value="1"/>
</dbReference>
<dbReference type="InterPro" id="IPR050923">
    <property type="entry name" value="Cell_Proc_Reg/RNA_Proc"/>
</dbReference>
<dbReference type="InterPro" id="IPR014720">
    <property type="entry name" value="dsRBD_dom"/>
</dbReference>
<dbReference type="InterPro" id="IPR000253">
    <property type="entry name" value="FHA_dom"/>
</dbReference>
<dbReference type="InterPro" id="IPR008984">
    <property type="entry name" value="SMAD_FHA_dom_sf"/>
</dbReference>
<dbReference type="PANTHER" id="PTHR23308">
    <property type="entry name" value="NUCLEAR INHIBITOR OF PROTEIN PHOSPHATASE-1"/>
    <property type="match status" value="1"/>
</dbReference>
<dbReference type="Pfam" id="PF00035">
    <property type="entry name" value="dsrm"/>
    <property type="match status" value="1"/>
</dbReference>
<dbReference type="Pfam" id="PF00498">
    <property type="entry name" value="FHA"/>
    <property type="match status" value="1"/>
</dbReference>
<dbReference type="SMART" id="SM00240">
    <property type="entry name" value="FHA"/>
    <property type="match status" value="1"/>
</dbReference>
<dbReference type="SUPFAM" id="SSF49879">
    <property type="entry name" value="SMAD/FHA domain"/>
    <property type="match status" value="1"/>
</dbReference>
<dbReference type="PROSITE" id="PS50006">
    <property type="entry name" value="FHA_DOMAIN"/>
    <property type="match status" value="1"/>
</dbReference>
<accession>Q9BWU0</accession>
<accession>A0A087X0M4</accession>
<accession>A6NJ39</accession>
<accession>Q4KMT1</accession>
<accession>Q4KMX0</accession>
<accession>Q7Z5Q9</accession>
<accession>Q9NVN2</accession>
<organism>
    <name type="scientific">Homo sapiens</name>
    <name type="common">Human</name>
    <dbReference type="NCBI Taxonomy" id="9606"/>
    <lineage>
        <taxon>Eukaryota</taxon>
        <taxon>Metazoa</taxon>
        <taxon>Chordata</taxon>
        <taxon>Craniata</taxon>
        <taxon>Vertebrata</taxon>
        <taxon>Euteleostomi</taxon>
        <taxon>Mammalia</taxon>
        <taxon>Eutheria</taxon>
        <taxon>Euarchontoglires</taxon>
        <taxon>Primates</taxon>
        <taxon>Haplorrhini</taxon>
        <taxon>Catarrhini</taxon>
        <taxon>Hominidae</taxon>
        <taxon>Homo</taxon>
    </lineage>
</organism>
<evidence type="ECO:0000255" key="1"/>
<evidence type="ECO:0000255" key="2">
    <source>
        <dbReference type="PROSITE-ProRule" id="PRU00086"/>
    </source>
</evidence>
<evidence type="ECO:0000256" key="3">
    <source>
        <dbReference type="SAM" id="MobiDB-lite"/>
    </source>
</evidence>
<evidence type="ECO:0000269" key="4">
    <source>
    </source>
</evidence>
<evidence type="ECO:0000269" key="5">
    <source>
    </source>
</evidence>
<evidence type="ECO:0000269" key="6">
    <source>
    </source>
</evidence>
<evidence type="ECO:0000305" key="7"/>
<evidence type="ECO:0007744" key="8">
    <source>
    </source>
</evidence>
<evidence type="ECO:0007744" key="9">
    <source>
    </source>
</evidence>
<evidence type="ECO:0007744" key="10">
    <source>
    </source>
</evidence>
<evidence type="ECO:0007744" key="11">
    <source>
    </source>
</evidence>
<evidence type="ECO:0007744" key="12">
    <source>
    </source>
</evidence>
<evidence type="ECO:0007744" key="13">
    <source>
    </source>
</evidence>
<evidence type="ECO:0007744" key="14">
    <source>
    </source>
</evidence>
<evidence type="ECO:0007829" key="15">
    <source>
        <dbReference type="PDB" id="4H87"/>
    </source>
</evidence>
<gene>
    <name type="primary">SLC4A1AP</name>
    <name type="ORF">HLC3</name>
</gene>
<keyword id="KW-0002">3D-structure</keyword>
<keyword id="KW-0024">Alternative initiation</keyword>
<keyword id="KW-0175">Coiled coil</keyword>
<keyword id="KW-0963">Cytoplasm</keyword>
<keyword id="KW-1017">Isopeptide bond</keyword>
<keyword id="KW-0539">Nucleus</keyword>
<keyword id="KW-0597">Phosphoprotein</keyword>
<keyword id="KW-1267">Proteomics identification</keyword>
<keyword id="KW-1185">Reference proteome</keyword>
<keyword id="KW-0832">Ubl conjugation</keyword>
<name>NADAP_HUMAN</name>
<feature type="chain" id="PRO_0000076268" description="Kanadaptin">
    <location>
        <begin position="1"/>
        <end position="742"/>
    </location>
</feature>
<feature type="domain" description="FHA" evidence="2">
    <location>
        <begin position="135"/>
        <end position="195"/>
    </location>
</feature>
<feature type="region of interest" description="Disordered" evidence="3">
    <location>
        <begin position="1"/>
        <end position="112"/>
    </location>
</feature>
<feature type="region of interest" description="Disordered" evidence="3">
    <location>
        <begin position="254"/>
        <end position="282"/>
    </location>
</feature>
<feature type="region of interest" description="Disordered" evidence="3">
    <location>
        <begin position="565"/>
        <end position="742"/>
    </location>
</feature>
<feature type="coiled-coil region" evidence="1">
    <location>
        <begin position="443"/>
        <end position="476"/>
    </location>
</feature>
<feature type="compositionally biased region" description="Polar residues" evidence="3">
    <location>
        <begin position="1"/>
        <end position="16"/>
    </location>
</feature>
<feature type="compositionally biased region" description="Low complexity" evidence="3">
    <location>
        <begin position="27"/>
        <end position="43"/>
    </location>
</feature>
<feature type="compositionally biased region" description="Basic and acidic residues" evidence="3">
    <location>
        <begin position="72"/>
        <end position="82"/>
    </location>
</feature>
<feature type="compositionally biased region" description="Pro residues" evidence="3">
    <location>
        <begin position="96"/>
        <end position="106"/>
    </location>
</feature>
<feature type="compositionally biased region" description="Acidic residues" evidence="3">
    <location>
        <begin position="256"/>
        <end position="265"/>
    </location>
</feature>
<feature type="compositionally biased region" description="Acidic residues" evidence="3">
    <location>
        <begin position="591"/>
        <end position="606"/>
    </location>
</feature>
<feature type="compositionally biased region" description="Basic and acidic residues" evidence="3">
    <location>
        <begin position="607"/>
        <end position="619"/>
    </location>
</feature>
<feature type="compositionally biased region" description="Low complexity" evidence="3">
    <location>
        <begin position="699"/>
        <end position="708"/>
    </location>
</feature>
<feature type="compositionally biased region" description="Basic and acidic residues" evidence="3">
    <location>
        <begin position="732"/>
        <end position="742"/>
    </location>
</feature>
<feature type="modified residue" description="Phosphoserine" evidence="10 12 13">
    <location>
        <position position="28"/>
    </location>
</feature>
<feature type="modified residue" description="Phosphoserine" evidence="12 13">
    <location>
        <position position="90"/>
    </location>
</feature>
<feature type="modified residue" description="Phosphoserine" evidence="8 9 10 11 12">
    <location>
        <position position="258"/>
    </location>
</feature>
<feature type="modified residue" description="Phosphoserine" evidence="8 9 10 11 12 13">
    <location>
        <position position="412"/>
    </location>
</feature>
<feature type="modified residue" description="Phosphoserine" evidence="8">
    <location>
        <position position="476"/>
    </location>
</feature>
<feature type="modified residue" description="Phosphoserine" evidence="12">
    <location>
        <position position="655"/>
    </location>
</feature>
<feature type="modified residue" description="Phosphoserine" evidence="10 12">
    <location>
        <position position="658"/>
    </location>
</feature>
<feature type="cross-link" description="Glycyl lysine isopeptide (Lys-Gly) (interchain with G-Cter in SUMO2)" evidence="14">
    <location>
        <position position="441"/>
    </location>
</feature>
<feature type="splice variant" id="VSP_062158" description="In isoform 1.">
    <original>M</original>
    <variation>MLAPLRNAPGREGATSPSPPTDATGSLGEWDVDRNVKTEGWVSKERISKLHRLRM</variation>
    <location>
        <position position="1"/>
    </location>
</feature>
<feature type="sequence variant" id="VAR_024748" description="In dbSNP:rs9678851." evidence="4 5 9">
    <original>P</original>
    <variation>T</variation>
    <location>
        <position position="85"/>
    </location>
</feature>
<feature type="sequence variant" id="VAR_051219" description="In dbSNP:rs9679004.">
    <original>R</original>
    <variation>C</variation>
    <location>
        <position position="127"/>
    </location>
</feature>
<feature type="sequence conflict" description="In Ref. 6; AAN12269." evidence="7" ref="6">
    <original>SNSGE</original>
    <variation>PIAKP</variation>
    <location>
        <begin position="57"/>
        <end position="61"/>
    </location>
</feature>
<feature type="sequence conflict" description="In Ref. 2; AAK29177." evidence="7" ref="2">
    <original>G</original>
    <variation>R</variation>
    <location>
        <position position="255"/>
    </location>
</feature>
<feature type="sequence conflict" description="In Ref. 5; AAH98358." evidence="7" ref="5">
    <original>Q</original>
    <variation>R</variation>
    <location>
        <position position="305"/>
    </location>
</feature>
<feature type="sequence conflict" description="In Ref. 2; AAK29177." evidence="7" ref="2">
    <original>A</original>
    <variation>V</variation>
    <location>
        <position position="319"/>
    </location>
</feature>
<feature type="sequence conflict" description="In Ref. 6; AAN12269." evidence="7" ref="6">
    <original>L</original>
    <variation>I</variation>
    <location>
        <position position="390"/>
    </location>
</feature>
<feature type="strand" evidence="15">
    <location>
        <begin position="114"/>
        <end position="119"/>
    </location>
</feature>
<feature type="strand" evidence="15">
    <location>
        <begin position="122"/>
        <end position="128"/>
    </location>
</feature>
<feature type="strand" evidence="15">
    <location>
        <begin position="133"/>
        <end position="140"/>
    </location>
</feature>
<feature type="strand" evidence="15">
    <location>
        <begin position="143"/>
        <end position="146"/>
    </location>
</feature>
<feature type="strand" evidence="15">
    <location>
        <begin position="157"/>
        <end position="162"/>
    </location>
</feature>
<feature type="strand" evidence="15">
    <location>
        <begin position="177"/>
        <end position="181"/>
    </location>
</feature>
<feature type="strand" evidence="15">
    <location>
        <begin position="188"/>
        <end position="190"/>
    </location>
</feature>
<feature type="strand" evidence="15">
    <location>
        <begin position="208"/>
        <end position="211"/>
    </location>
</feature>
<feature type="strand" evidence="15">
    <location>
        <begin position="215"/>
        <end position="221"/>
    </location>
</feature>
<proteinExistence type="evidence at protein level"/>
<reference key="1">
    <citation type="journal article" date="2004" name="Mol. Membr. Biol.">
        <title>Human kanadaptin and kidney anion exchanger 1 (kAE1) do not interact in transfected HEK 293 cells.</title>
        <authorList>
            <person name="Kittanakom S."/>
            <person name="Keskanokwong T."/>
            <person name="Akkarapatumwong V."/>
            <person name="Yenchitsomanus P.-T."/>
            <person name="Reithmeier R.A.F."/>
        </authorList>
    </citation>
    <scope>NUCLEOTIDE SEQUENCE [MRNA] (ISOFORM 1)</scope>
    <scope>SUBCELLULAR LOCATION</scope>
    <scope>TISSUE SPECIFICITY</scope>
</reference>
<reference key="2">
    <citation type="journal article" date="2004" name="Nat. Genet.">
        <title>Complete sequencing and characterization of 21,243 full-length human cDNAs.</title>
        <authorList>
            <person name="Ota T."/>
            <person name="Suzuki Y."/>
            <person name="Nishikawa T."/>
            <person name="Otsuki T."/>
            <person name="Sugiyama T."/>
            <person name="Irie R."/>
            <person name="Wakamatsu A."/>
            <person name="Hayashi K."/>
            <person name="Sato H."/>
            <person name="Nagai K."/>
            <person name="Kimura K."/>
            <person name="Makita H."/>
            <person name="Sekine M."/>
            <person name="Obayashi M."/>
            <person name="Nishi T."/>
            <person name="Shibahara T."/>
            <person name="Tanaka T."/>
            <person name="Ishii S."/>
            <person name="Yamamoto J."/>
            <person name="Saito K."/>
            <person name="Kawai Y."/>
            <person name="Isono Y."/>
            <person name="Nakamura Y."/>
            <person name="Nagahari K."/>
            <person name="Murakami K."/>
            <person name="Yasuda T."/>
            <person name="Iwayanagi T."/>
            <person name="Wagatsuma M."/>
            <person name="Shiratori A."/>
            <person name="Sudo H."/>
            <person name="Hosoiri T."/>
            <person name="Kaku Y."/>
            <person name="Kodaira H."/>
            <person name="Kondo H."/>
            <person name="Sugawara M."/>
            <person name="Takahashi M."/>
            <person name="Kanda K."/>
            <person name="Yokoi T."/>
            <person name="Furuya T."/>
            <person name="Kikkawa E."/>
            <person name="Omura Y."/>
            <person name="Abe K."/>
            <person name="Kamihara K."/>
            <person name="Katsuta N."/>
            <person name="Sato K."/>
            <person name="Tanikawa M."/>
            <person name="Yamazaki M."/>
            <person name="Ninomiya K."/>
            <person name="Ishibashi T."/>
            <person name="Yamashita H."/>
            <person name="Murakawa K."/>
            <person name="Fujimori K."/>
            <person name="Tanai H."/>
            <person name="Kimata M."/>
            <person name="Watanabe M."/>
            <person name="Hiraoka S."/>
            <person name="Chiba Y."/>
            <person name="Ishida S."/>
            <person name="Ono Y."/>
            <person name="Takiguchi S."/>
            <person name="Watanabe S."/>
            <person name="Yosida M."/>
            <person name="Hotuta T."/>
            <person name="Kusano J."/>
            <person name="Kanehori K."/>
            <person name="Takahashi-Fujii A."/>
            <person name="Hara H."/>
            <person name="Tanase T.-O."/>
            <person name="Nomura Y."/>
            <person name="Togiya S."/>
            <person name="Komai F."/>
            <person name="Hara R."/>
            <person name="Takeuchi K."/>
            <person name="Arita M."/>
            <person name="Imose N."/>
            <person name="Musashino K."/>
            <person name="Yuuki H."/>
            <person name="Oshima A."/>
            <person name="Sasaki N."/>
            <person name="Aotsuka S."/>
            <person name="Yoshikawa Y."/>
            <person name="Matsunawa H."/>
            <person name="Ichihara T."/>
            <person name="Shiohata N."/>
            <person name="Sano S."/>
            <person name="Moriya S."/>
            <person name="Momiyama H."/>
            <person name="Satoh N."/>
            <person name="Takami S."/>
            <person name="Terashima Y."/>
            <person name="Suzuki O."/>
            <person name="Nakagawa S."/>
            <person name="Senoh A."/>
            <person name="Mizoguchi H."/>
            <person name="Goto Y."/>
            <person name="Shimizu F."/>
            <person name="Wakebe H."/>
            <person name="Hishigaki H."/>
            <person name="Watanabe T."/>
            <person name="Sugiyama A."/>
            <person name="Takemoto M."/>
            <person name="Kawakami B."/>
            <person name="Yamazaki M."/>
            <person name="Watanabe K."/>
            <person name="Kumagai A."/>
            <person name="Itakura S."/>
            <person name="Fukuzumi Y."/>
            <person name="Fujimori Y."/>
            <person name="Komiyama M."/>
            <person name="Tashiro H."/>
            <person name="Tanigami A."/>
            <person name="Fujiwara T."/>
            <person name="Ono T."/>
            <person name="Yamada K."/>
            <person name="Fujii Y."/>
            <person name="Ozaki K."/>
            <person name="Hirao M."/>
            <person name="Ohmori Y."/>
            <person name="Kawabata A."/>
            <person name="Hikiji T."/>
            <person name="Kobatake N."/>
            <person name="Inagaki H."/>
            <person name="Ikema Y."/>
            <person name="Okamoto S."/>
            <person name="Okitani R."/>
            <person name="Kawakami T."/>
            <person name="Noguchi S."/>
            <person name="Itoh T."/>
            <person name="Shigeta K."/>
            <person name="Senba T."/>
            <person name="Matsumura K."/>
            <person name="Nakajima Y."/>
            <person name="Mizuno T."/>
            <person name="Morinaga M."/>
            <person name="Sasaki M."/>
            <person name="Togashi T."/>
            <person name="Oyama M."/>
            <person name="Hata H."/>
            <person name="Watanabe M."/>
            <person name="Komatsu T."/>
            <person name="Mizushima-Sugano J."/>
            <person name="Satoh T."/>
            <person name="Shirai Y."/>
            <person name="Takahashi Y."/>
            <person name="Nakagawa K."/>
            <person name="Okumura K."/>
            <person name="Nagase T."/>
            <person name="Nomura N."/>
            <person name="Kikuchi H."/>
            <person name="Masuho Y."/>
            <person name="Yamashita R."/>
            <person name="Nakai K."/>
            <person name="Yada T."/>
            <person name="Nakamura Y."/>
            <person name="Ohara O."/>
            <person name="Isogai T."/>
            <person name="Sugano S."/>
        </authorList>
    </citation>
    <scope>NUCLEOTIDE SEQUENCE [LARGE SCALE MRNA] (ISOFORM 1)</scope>
    <scope>VARIANT THR-85</scope>
</reference>
<reference key="3">
    <citation type="journal article" date="2005" name="Nature">
        <title>Generation and annotation of the DNA sequences of human chromosomes 2 and 4.</title>
        <authorList>
            <person name="Hillier L.W."/>
            <person name="Graves T.A."/>
            <person name="Fulton R.S."/>
            <person name="Fulton L.A."/>
            <person name="Pepin K.H."/>
            <person name="Minx P."/>
            <person name="Wagner-McPherson C."/>
            <person name="Layman D."/>
            <person name="Wylie K."/>
            <person name="Sekhon M."/>
            <person name="Becker M.C."/>
            <person name="Fewell G.A."/>
            <person name="Delehaunty K.D."/>
            <person name="Miner T.L."/>
            <person name="Nash W.E."/>
            <person name="Kremitzki C."/>
            <person name="Oddy L."/>
            <person name="Du H."/>
            <person name="Sun H."/>
            <person name="Bradshaw-Cordum H."/>
            <person name="Ali J."/>
            <person name="Carter J."/>
            <person name="Cordes M."/>
            <person name="Harris A."/>
            <person name="Isak A."/>
            <person name="van Brunt A."/>
            <person name="Nguyen C."/>
            <person name="Du F."/>
            <person name="Courtney L."/>
            <person name="Kalicki J."/>
            <person name="Ozersky P."/>
            <person name="Abbott S."/>
            <person name="Armstrong J."/>
            <person name="Belter E.A."/>
            <person name="Caruso L."/>
            <person name="Cedroni M."/>
            <person name="Cotton M."/>
            <person name="Davidson T."/>
            <person name="Desai A."/>
            <person name="Elliott G."/>
            <person name="Erb T."/>
            <person name="Fronick C."/>
            <person name="Gaige T."/>
            <person name="Haakenson W."/>
            <person name="Haglund K."/>
            <person name="Holmes A."/>
            <person name="Harkins R."/>
            <person name="Kim K."/>
            <person name="Kruchowski S.S."/>
            <person name="Strong C.M."/>
            <person name="Grewal N."/>
            <person name="Goyea E."/>
            <person name="Hou S."/>
            <person name="Levy A."/>
            <person name="Martinka S."/>
            <person name="Mead K."/>
            <person name="McLellan M.D."/>
            <person name="Meyer R."/>
            <person name="Randall-Maher J."/>
            <person name="Tomlinson C."/>
            <person name="Dauphin-Kohlberg S."/>
            <person name="Kozlowicz-Reilly A."/>
            <person name="Shah N."/>
            <person name="Swearengen-Shahid S."/>
            <person name="Snider J."/>
            <person name="Strong J.T."/>
            <person name="Thompson J."/>
            <person name="Yoakum M."/>
            <person name="Leonard S."/>
            <person name="Pearman C."/>
            <person name="Trani L."/>
            <person name="Radionenko M."/>
            <person name="Waligorski J.E."/>
            <person name="Wang C."/>
            <person name="Rock S.M."/>
            <person name="Tin-Wollam A.-M."/>
            <person name="Maupin R."/>
            <person name="Latreille P."/>
            <person name="Wendl M.C."/>
            <person name="Yang S.-P."/>
            <person name="Pohl C."/>
            <person name="Wallis J.W."/>
            <person name="Spieth J."/>
            <person name="Bieri T.A."/>
            <person name="Berkowicz N."/>
            <person name="Nelson J.O."/>
            <person name="Osborne J."/>
            <person name="Ding L."/>
            <person name="Meyer R."/>
            <person name="Sabo A."/>
            <person name="Shotland Y."/>
            <person name="Sinha P."/>
            <person name="Wohldmann P.E."/>
            <person name="Cook L.L."/>
            <person name="Hickenbotham M.T."/>
            <person name="Eldred J."/>
            <person name="Williams D."/>
            <person name="Jones T.A."/>
            <person name="She X."/>
            <person name="Ciccarelli F.D."/>
            <person name="Izaurralde E."/>
            <person name="Taylor J."/>
            <person name="Schmutz J."/>
            <person name="Myers R.M."/>
            <person name="Cox D.R."/>
            <person name="Huang X."/>
            <person name="McPherson J.D."/>
            <person name="Mardis E.R."/>
            <person name="Clifton S.W."/>
            <person name="Warren W.C."/>
            <person name="Chinwalla A.T."/>
            <person name="Eddy S.R."/>
            <person name="Marra M.A."/>
            <person name="Ovcharenko I."/>
            <person name="Furey T.S."/>
            <person name="Miller W."/>
            <person name="Eichler E.E."/>
            <person name="Bork P."/>
            <person name="Suyama M."/>
            <person name="Torrents D."/>
            <person name="Waterston R.H."/>
            <person name="Wilson R.K."/>
        </authorList>
    </citation>
    <scope>NUCLEOTIDE SEQUENCE [LARGE SCALE GENOMIC DNA]</scope>
</reference>
<reference key="4">
    <citation type="submission" date="2005-09" db="EMBL/GenBank/DDBJ databases">
        <authorList>
            <person name="Mural R.J."/>
            <person name="Istrail S."/>
            <person name="Sutton G.G."/>
            <person name="Florea L."/>
            <person name="Halpern A.L."/>
            <person name="Mobarry C.M."/>
            <person name="Lippert R."/>
            <person name="Walenz B."/>
            <person name="Shatkay H."/>
            <person name="Dew I."/>
            <person name="Miller J.R."/>
            <person name="Flanigan M.J."/>
            <person name="Edwards N.J."/>
            <person name="Bolanos R."/>
            <person name="Fasulo D."/>
            <person name="Halldorsson B.V."/>
            <person name="Hannenhalli S."/>
            <person name="Turner R."/>
            <person name="Yooseph S."/>
            <person name="Lu F."/>
            <person name="Nusskern D.R."/>
            <person name="Shue B.C."/>
            <person name="Zheng X.H."/>
            <person name="Zhong F."/>
            <person name="Delcher A.L."/>
            <person name="Huson D.H."/>
            <person name="Kravitz S.A."/>
            <person name="Mouchard L."/>
            <person name="Reinert K."/>
            <person name="Remington K.A."/>
            <person name="Clark A.G."/>
            <person name="Waterman M.S."/>
            <person name="Eichler E.E."/>
            <person name="Adams M.D."/>
            <person name="Hunkapiller M.W."/>
            <person name="Myers E.W."/>
            <person name="Venter J.C."/>
        </authorList>
    </citation>
    <scope>NUCLEOTIDE SEQUENCE [LARGE SCALE GENOMIC DNA]</scope>
</reference>
<reference key="5">
    <citation type="journal article" date="2004" name="Genome Res.">
        <title>The status, quality, and expansion of the NIH full-length cDNA project: the Mammalian Gene Collection (MGC).</title>
        <authorList>
            <consortium name="The MGC Project Team"/>
        </authorList>
    </citation>
    <scope>NUCLEOTIDE SEQUENCE [LARGE SCALE MRNA] (ISOFORM 1)</scope>
    <scope>VARIANT THR-85</scope>
</reference>
<reference key="6">
    <citation type="submission" date="2002-06" db="EMBL/GenBank/DDBJ databases">
        <title>Identification of a new oncogene in human lung cancer.</title>
        <authorList>
            <person name="Kim J.W."/>
        </authorList>
    </citation>
    <scope>NUCLEOTIDE SEQUENCE [LARGE SCALE MRNA] OF 57-742</scope>
</reference>
<reference key="7">
    <citation type="journal article" date="2006" name="Cell">
        <title>Global, in vivo, and site-specific phosphorylation dynamics in signaling networks.</title>
        <authorList>
            <person name="Olsen J.V."/>
            <person name="Blagoev B."/>
            <person name="Gnad F."/>
            <person name="Macek B."/>
            <person name="Kumar C."/>
            <person name="Mortensen P."/>
            <person name="Mann M."/>
        </authorList>
    </citation>
    <scope>IDENTIFICATION BY MASS SPECTROMETRY [LARGE SCALE ANALYSIS]</scope>
    <source>
        <tissue>Cervix carcinoma</tissue>
    </source>
</reference>
<reference key="8">
    <citation type="journal article" date="2007" name="Science">
        <title>ATM and ATR substrate analysis reveals extensive protein networks responsive to DNA damage.</title>
        <authorList>
            <person name="Matsuoka S."/>
            <person name="Ballif B.A."/>
            <person name="Smogorzewska A."/>
            <person name="McDonald E.R. III"/>
            <person name="Hurov K.E."/>
            <person name="Luo J."/>
            <person name="Bakalarski C.E."/>
            <person name="Zhao Z."/>
            <person name="Solimini N."/>
            <person name="Lerenthal Y."/>
            <person name="Shiloh Y."/>
            <person name="Gygi S.P."/>
            <person name="Elledge S.J."/>
        </authorList>
    </citation>
    <scope>IDENTIFICATION BY MASS SPECTROMETRY [LARGE SCALE ANALYSIS]</scope>
    <source>
        <tissue>Embryonic kidney</tissue>
    </source>
</reference>
<reference key="9">
    <citation type="journal article" date="2008" name="Proc. Natl. Acad. Sci. U.S.A.">
        <title>A quantitative atlas of mitotic phosphorylation.</title>
        <authorList>
            <person name="Dephoure N."/>
            <person name="Zhou C."/>
            <person name="Villen J."/>
            <person name="Beausoleil S.A."/>
            <person name="Bakalarski C.E."/>
            <person name="Elledge S.J."/>
            <person name="Gygi S.P."/>
        </authorList>
    </citation>
    <scope>PHOSPHORYLATION [LARGE SCALE ANALYSIS] AT SER-258; SER-412 AND SER-476</scope>
    <scope>IDENTIFICATION BY MASS SPECTROMETRY [LARGE SCALE ANALYSIS]</scope>
    <source>
        <tissue>Cervix carcinoma</tissue>
    </source>
</reference>
<reference key="10">
    <citation type="journal article" date="2009" name="Anal. Chem.">
        <title>Lys-N and trypsin cover complementary parts of the phosphoproteome in a refined SCX-based approach.</title>
        <authorList>
            <person name="Gauci S."/>
            <person name="Helbig A.O."/>
            <person name="Slijper M."/>
            <person name="Krijgsveld J."/>
            <person name="Heck A.J."/>
            <person name="Mohammed S."/>
        </authorList>
    </citation>
    <scope>IDENTIFICATION BY MASS SPECTROMETRY [LARGE SCALE ANALYSIS]</scope>
</reference>
<reference key="11">
    <citation type="journal article" date="2009" name="Sci. Signal.">
        <title>Quantitative phosphoproteomic analysis of T cell receptor signaling reveals system-wide modulation of protein-protein interactions.</title>
        <authorList>
            <person name="Mayya V."/>
            <person name="Lundgren D.H."/>
            <person name="Hwang S.-I."/>
            <person name="Rezaul K."/>
            <person name="Wu L."/>
            <person name="Eng J.K."/>
            <person name="Rodionov V."/>
            <person name="Han D.K."/>
        </authorList>
    </citation>
    <scope>PHOSPHORYLATION [LARGE SCALE ANALYSIS] AT SER-258 AND SER-412</scope>
    <scope>VARIANT [LARGE SCALE ANALYSIS] THR-85</scope>
    <scope>IDENTIFICATION BY MASS SPECTROMETRY [LARGE SCALE ANALYSIS]</scope>
    <source>
        <tissue>Leukemic T-cell</tissue>
    </source>
</reference>
<reference key="12">
    <citation type="journal article" date="2010" name="Sci. Signal.">
        <title>Quantitative phosphoproteomics reveals widespread full phosphorylation site occupancy during mitosis.</title>
        <authorList>
            <person name="Olsen J.V."/>
            <person name="Vermeulen M."/>
            <person name="Santamaria A."/>
            <person name="Kumar C."/>
            <person name="Miller M.L."/>
            <person name="Jensen L.J."/>
            <person name="Gnad F."/>
            <person name="Cox J."/>
            <person name="Jensen T.S."/>
            <person name="Nigg E.A."/>
            <person name="Brunak S."/>
            <person name="Mann M."/>
        </authorList>
    </citation>
    <scope>PHOSPHORYLATION [LARGE SCALE ANALYSIS] AT SER-28; SER-258; SER-412 AND SER-658</scope>
    <scope>IDENTIFICATION BY MASS SPECTROMETRY [LARGE SCALE ANALYSIS]</scope>
    <source>
        <tissue>Cervix carcinoma</tissue>
    </source>
</reference>
<reference key="13">
    <citation type="journal article" date="2011" name="BMC Syst. Biol.">
        <title>Initial characterization of the human central proteome.</title>
        <authorList>
            <person name="Burkard T.R."/>
            <person name="Planyavsky M."/>
            <person name="Kaupe I."/>
            <person name="Breitwieser F.P."/>
            <person name="Buerckstuemmer T."/>
            <person name="Bennett K.L."/>
            <person name="Superti-Furga G."/>
            <person name="Colinge J."/>
        </authorList>
    </citation>
    <scope>IDENTIFICATION BY MASS SPECTROMETRY [LARGE SCALE ANALYSIS]</scope>
</reference>
<reference key="14">
    <citation type="journal article" date="2011" name="Sci. Signal.">
        <title>System-wide temporal characterization of the proteome and phosphoproteome of human embryonic stem cell differentiation.</title>
        <authorList>
            <person name="Rigbolt K.T."/>
            <person name="Prokhorova T.A."/>
            <person name="Akimov V."/>
            <person name="Henningsen J."/>
            <person name="Johansen P.T."/>
            <person name="Kratchmarova I."/>
            <person name="Kassem M."/>
            <person name="Mann M."/>
            <person name="Olsen J.V."/>
            <person name="Blagoev B."/>
        </authorList>
    </citation>
    <scope>PHOSPHORYLATION [LARGE SCALE ANALYSIS] AT SER-258 AND SER-412</scope>
    <scope>IDENTIFICATION BY MASS SPECTROMETRY [LARGE SCALE ANALYSIS]</scope>
</reference>
<reference key="15">
    <citation type="journal article" date="2013" name="J. Proteome Res.">
        <title>Toward a comprehensive characterization of a human cancer cell phosphoproteome.</title>
        <authorList>
            <person name="Zhou H."/>
            <person name="Di Palma S."/>
            <person name="Preisinger C."/>
            <person name="Peng M."/>
            <person name="Polat A.N."/>
            <person name="Heck A.J."/>
            <person name="Mohammed S."/>
        </authorList>
    </citation>
    <scope>PHOSPHORYLATION [LARGE SCALE ANALYSIS] AT SER-28; SER-90; SER-258; SER-412; SER-655 AND SER-658</scope>
    <scope>IDENTIFICATION BY MASS SPECTROMETRY [LARGE SCALE ANALYSIS]</scope>
    <source>
        <tissue>Cervix carcinoma</tissue>
        <tissue>Erythroleukemia</tissue>
    </source>
</reference>
<reference key="16">
    <citation type="journal article" date="2014" name="J. Proteomics">
        <title>An enzyme assisted RP-RPLC approach for in-depth analysis of human liver phosphoproteome.</title>
        <authorList>
            <person name="Bian Y."/>
            <person name="Song C."/>
            <person name="Cheng K."/>
            <person name="Dong M."/>
            <person name="Wang F."/>
            <person name="Huang J."/>
            <person name="Sun D."/>
            <person name="Wang L."/>
            <person name="Ye M."/>
            <person name="Zou H."/>
        </authorList>
    </citation>
    <scope>PHOSPHORYLATION [LARGE SCALE ANALYSIS] AT SER-28; SER-90 AND SER-412</scope>
    <scope>IDENTIFICATION BY MASS SPECTROMETRY [LARGE SCALE ANALYSIS]</scope>
    <source>
        <tissue>Liver</tissue>
    </source>
</reference>
<reference key="17">
    <citation type="journal article" date="2017" name="Nat. Struct. Mol. Biol.">
        <title>Site-specific mapping of the human SUMO proteome reveals co-modification with phosphorylation.</title>
        <authorList>
            <person name="Hendriks I.A."/>
            <person name="Lyon D."/>
            <person name="Young C."/>
            <person name="Jensen L.J."/>
            <person name="Vertegaal A.C."/>
            <person name="Nielsen M.L."/>
        </authorList>
    </citation>
    <scope>SUMOYLATION [LARGE SCALE ANALYSIS] AT LYS-441</scope>
    <scope>IDENTIFICATION BY MASS SPECTROMETRY [LARGE SCALE ANALYSIS]</scope>
</reference>
<reference key="18">
    <citation type="submission" date="2012-10" db="PDB data bank">
        <title>Crystal structure of a FHA domain of kanadaptin (SLC4A1AP) from Homo sapiens at 1.55 A resolution.</title>
        <authorList>
            <consortium name="Joint center for structural genomics (JCSG)"/>
        </authorList>
    </citation>
    <scope>X-RAY CRYSTALLOGRAPHY (1.55 ANGSTROMS) OF 95-222</scope>
</reference>
<comment type="interaction">
    <interactant intactId="EBI-1999704">
        <id>Q9BWU0</id>
    </interactant>
    <interactant intactId="EBI-747644">
        <id>Q13418</id>
        <label>ILK</label>
    </interactant>
    <organismsDiffer>false</organismsDiffer>
    <experiments>7</experiments>
</comment>
<comment type="interaction">
    <interactant intactId="EBI-1999704">
        <id>Q9BWU0</id>
    </interactant>
    <interactant intactId="EBI-533224">
        <id>P15884</id>
        <label>TCF4</label>
    </interactant>
    <organismsDiffer>false</organismsDiffer>
    <experiments>3</experiments>
</comment>
<comment type="subcellular location">
    <subcellularLocation>
        <location evidence="6">Nucleus</location>
    </subcellularLocation>
    <subcellularLocation>
        <location evidence="6">Cytoplasm</location>
    </subcellularLocation>
    <text>Mainly nuclear. Small amounts are found in the cytoplasm.</text>
</comment>
<comment type="alternative products">
    <event type="alternative initiation"/>
    <isoform>
        <id>Q9BWU0-2</id>
        <name>2</name>
        <sequence type="displayed"/>
    </isoform>
    <isoform>
        <id>Q9BWU0-1</id>
        <name>1</name>
        <sequence type="described" ref="VSP_062158"/>
    </isoform>
</comment>
<comment type="tissue specificity">
    <text evidence="6">Ubiquitously expressed.</text>
</comment>
<comment type="miscellaneous">
    <text evidence="7">Isoform 2 is a prediction based on conservation with orthologs.</text>
</comment>
<comment type="caution">
    <text evidence="7">PubMed:15764369 initially suggested a role in targeting SLC4A1 (kidney anion exchanger 1) to the plasma membrane; it does not seem to do so as it does not interact with SLC4A1 and has no effect on SLC4A1 trafficking.</text>
</comment>
<comment type="sequence caution" evidence="7">
    <conflict type="erroneous initiation">
        <sequence resource="EMBL-CDS" id="AAN12269"/>
    </conflict>
    <text>Truncated N-terminus.</text>
</comment>
<comment type="online information" name="Wikipedia">
    <link uri="https://en.wikipedia.org/wiki/Band_3"/>
    <text>Band 3 entry</text>
</comment>
<protein>
    <recommendedName>
        <fullName>Kanadaptin</fullName>
    </recommendedName>
    <alternativeName>
        <fullName>Human lung cancer oncogene 3 protein</fullName>
        <shortName>HLC-3</shortName>
    </alternativeName>
    <alternativeName>
        <fullName>Kidney anion exchanger adapter protein</fullName>
    </alternativeName>
    <alternativeName>
        <fullName>Solute carrier family 4 anion exchanger member 1 adapter protein</fullName>
    </alternativeName>
</protein>
<sequence length="742" mass="82890">MADILSQSETLASQDLSGDFKKPALPVSPAARSKAPASSSSNPEEVQKEGPTALQDSNSGEPDIPPPQPDCGDFRSLQEEQSRPPTAVSSPGGPARAPPYQEPPWGGPATAPYSLETLKGGTILGTRSLKGTSYCLFGRLSGCDVCLEHPSVSRYHAVLQHRASGPDGECDSNGPGFYLYDLGSTHGTFLNKTRIPPRTYCRVHVGHVVRFGGSTRLFILQGPEEDREAESELTVTQLKELRKQQQILLEKKMLGEDSDEEEEMDTSERKINAGSQDDEMGCTWGMGEDAVEDDAEENPIVLEFQQEREAFYIKDPKKALQGFFDREGEELEYEFDEQGHSTWLCRVRLPVDDSTGKQLVAEAIHSGKKKEAMIQCSLEACRILDTLGLLRQEAVSRKRKAKNWEDEDFYDSDDDTFLDRTGLIEKKRLNRMKKAGKIDEKPETFESLVAKLNDAERELSEISERLKASSQVLSESPSQDSLDAFMSEMKSGSTLDGVSRKKLHLRTFELRKEQQRLKGLIKIVKPAEIPELKKTETQTTGAENKAKKLTLPLFGAMKGGSKFKLKTGTVGKLPPKRPELPPTLMRMKDEPEVEEEEEEEEEEEKEKEEHEKKKLEDGSLSRPQPEIEPEAAVQEMRPPTDLTHFKETQTHENMSQLSEEEQNKDYQDCSKTTSLCAGPSASKNEYEKSRGELKKKKTPGPGKLPPTLSSKYPEDDPDYCVWVPPEGQSGDGRTHLNDKYGY</sequence>